<proteinExistence type="inferred from homology"/>
<feature type="chain" id="PRO_1000184573" description="Peptide methionine sulfoxide reductase MsrA">
    <location>
        <begin position="1"/>
        <end position="212"/>
    </location>
</feature>
<feature type="active site" evidence="1">
    <location>
        <position position="51"/>
    </location>
</feature>
<reference key="1">
    <citation type="journal article" date="2008" name="PLoS ONE">
        <title>A recalibrated molecular clock and independent origins for the cholera pandemic clones.</title>
        <authorList>
            <person name="Feng L."/>
            <person name="Reeves P.R."/>
            <person name="Lan R."/>
            <person name="Ren Y."/>
            <person name="Gao C."/>
            <person name="Zhou Z."/>
            <person name="Ren Y."/>
            <person name="Cheng J."/>
            <person name="Wang W."/>
            <person name="Wang J."/>
            <person name="Qian W."/>
            <person name="Li D."/>
            <person name="Wang L."/>
        </authorList>
    </citation>
    <scope>NUCLEOTIDE SEQUENCE [LARGE SCALE GENOMIC DNA]</scope>
    <source>
        <strain>M66-2</strain>
    </source>
</reference>
<organism>
    <name type="scientific">Vibrio cholerae serotype O1 (strain M66-2)</name>
    <dbReference type="NCBI Taxonomy" id="579112"/>
    <lineage>
        <taxon>Bacteria</taxon>
        <taxon>Pseudomonadati</taxon>
        <taxon>Pseudomonadota</taxon>
        <taxon>Gammaproteobacteria</taxon>
        <taxon>Vibrionales</taxon>
        <taxon>Vibrionaceae</taxon>
        <taxon>Vibrio</taxon>
    </lineage>
</organism>
<evidence type="ECO:0000255" key="1">
    <source>
        <dbReference type="HAMAP-Rule" id="MF_01401"/>
    </source>
</evidence>
<name>MSRA_VIBCM</name>
<accession>C3LRL2</accession>
<keyword id="KW-0560">Oxidoreductase</keyword>
<comment type="function">
    <text evidence="1">Has an important function as a repair enzyme for proteins that have been inactivated by oxidation. Catalyzes the reversible oxidation-reduction of methionine sulfoxide in proteins to methionine.</text>
</comment>
<comment type="catalytic activity">
    <reaction evidence="1">
        <text>L-methionyl-[protein] + [thioredoxin]-disulfide + H2O = L-methionyl-(S)-S-oxide-[protein] + [thioredoxin]-dithiol</text>
        <dbReference type="Rhea" id="RHEA:14217"/>
        <dbReference type="Rhea" id="RHEA-COMP:10698"/>
        <dbReference type="Rhea" id="RHEA-COMP:10700"/>
        <dbReference type="Rhea" id="RHEA-COMP:12313"/>
        <dbReference type="Rhea" id="RHEA-COMP:12315"/>
        <dbReference type="ChEBI" id="CHEBI:15377"/>
        <dbReference type="ChEBI" id="CHEBI:16044"/>
        <dbReference type="ChEBI" id="CHEBI:29950"/>
        <dbReference type="ChEBI" id="CHEBI:44120"/>
        <dbReference type="ChEBI" id="CHEBI:50058"/>
        <dbReference type="EC" id="1.8.4.11"/>
    </reaction>
</comment>
<comment type="catalytic activity">
    <reaction evidence="1">
        <text>[thioredoxin]-disulfide + L-methionine + H2O = L-methionine (S)-S-oxide + [thioredoxin]-dithiol</text>
        <dbReference type="Rhea" id="RHEA:19993"/>
        <dbReference type="Rhea" id="RHEA-COMP:10698"/>
        <dbReference type="Rhea" id="RHEA-COMP:10700"/>
        <dbReference type="ChEBI" id="CHEBI:15377"/>
        <dbReference type="ChEBI" id="CHEBI:29950"/>
        <dbReference type="ChEBI" id="CHEBI:50058"/>
        <dbReference type="ChEBI" id="CHEBI:57844"/>
        <dbReference type="ChEBI" id="CHEBI:58772"/>
        <dbReference type="EC" id="1.8.4.11"/>
    </reaction>
</comment>
<comment type="similarity">
    <text evidence="1">Belongs to the MsrA Met sulfoxide reductase family.</text>
</comment>
<gene>
    <name evidence="1" type="primary">msrA</name>
    <name type="ordered locus">VCM66_2470</name>
</gene>
<sequence>MLDKQTMVTAHNALPGRTTAMSIDDTHFVNGSSLTAAPQSGQQQILIGMGCFWGAERLFWQLDGVISTSVGYSGGFTPNPTYEEVCSGKTGHTEVVRVIFDPERLPLTELLRAFWERHDPTQGMRQGNDRGTQYRSAIYTFSEDQREIAEASKAAYQALLTAQHRPSITTEILPAGAYYFAETYHQQYLAKNPNGYCGLGGTGVCFPPHSTL</sequence>
<protein>
    <recommendedName>
        <fullName evidence="1">Peptide methionine sulfoxide reductase MsrA</fullName>
        <shortName evidence="1">Protein-methionine-S-oxide reductase</shortName>
        <ecNumber evidence="1">1.8.4.11</ecNumber>
    </recommendedName>
    <alternativeName>
        <fullName evidence="1">Peptide-methionine (S)-S-oxide reductase</fullName>
        <shortName evidence="1">Peptide Met(O) reductase</shortName>
    </alternativeName>
</protein>
<dbReference type="EC" id="1.8.4.11" evidence="1"/>
<dbReference type="EMBL" id="CP001233">
    <property type="protein sequence ID" value="ACP06767.1"/>
    <property type="molecule type" value="Genomic_DNA"/>
</dbReference>
<dbReference type="RefSeq" id="WP_000884809.1">
    <property type="nucleotide sequence ID" value="NC_012578.1"/>
</dbReference>
<dbReference type="SMR" id="C3LRL2"/>
<dbReference type="GeneID" id="69718846"/>
<dbReference type="KEGG" id="vcm:VCM66_2470"/>
<dbReference type="HOGENOM" id="CLU_031040_10_3_6"/>
<dbReference type="Proteomes" id="UP000001217">
    <property type="component" value="Chromosome I"/>
</dbReference>
<dbReference type="GO" id="GO:0005737">
    <property type="term" value="C:cytoplasm"/>
    <property type="evidence" value="ECO:0007669"/>
    <property type="project" value="TreeGrafter"/>
</dbReference>
<dbReference type="GO" id="GO:0036456">
    <property type="term" value="F:L-methionine-(S)-S-oxide reductase activity"/>
    <property type="evidence" value="ECO:0007669"/>
    <property type="project" value="TreeGrafter"/>
</dbReference>
<dbReference type="GO" id="GO:0008113">
    <property type="term" value="F:peptide-methionine (S)-S-oxide reductase activity"/>
    <property type="evidence" value="ECO:0007669"/>
    <property type="project" value="UniProtKB-UniRule"/>
</dbReference>
<dbReference type="GO" id="GO:0034599">
    <property type="term" value="P:cellular response to oxidative stress"/>
    <property type="evidence" value="ECO:0007669"/>
    <property type="project" value="TreeGrafter"/>
</dbReference>
<dbReference type="GO" id="GO:0036211">
    <property type="term" value="P:protein modification process"/>
    <property type="evidence" value="ECO:0007669"/>
    <property type="project" value="UniProtKB-UniRule"/>
</dbReference>
<dbReference type="FunFam" id="3.30.1060.10:FF:000001">
    <property type="entry name" value="Peptide methionine sulfoxide reductase MsrA"/>
    <property type="match status" value="1"/>
</dbReference>
<dbReference type="Gene3D" id="3.30.1060.10">
    <property type="entry name" value="Peptide methionine sulphoxide reductase MsrA"/>
    <property type="match status" value="1"/>
</dbReference>
<dbReference type="HAMAP" id="MF_01401">
    <property type="entry name" value="MsrA"/>
    <property type="match status" value="1"/>
</dbReference>
<dbReference type="InterPro" id="IPR002569">
    <property type="entry name" value="Met_Sox_Rdtase_MsrA_dom"/>
</dbReference>
<dbReference type="InterPro" id="IPR036509">
    <property type="entry name" value="Met_Sox_Rdtase_MsrA_sf"/>
</dbReference>
<dbReference type="InterPro" id="IPR050162">
    <property type="entry name" value="MsrA_MetSO_reductase"/>
</dbReference>
<dbReference type="NCBIfam" id="TIGR00401">
    <property type="entry name" value="msrA"/>
    <property type="match status" value="1"/>
</dbReference>
<dbReference type="PANTHER" id="PTHR42799">
    <property type="entry name" value="MITOCHONDRIAL PEPTIDE METHIONINE SULFOXIDE REDUCTASE"/>
    <property type="match status" value="1"/>
</dbReference>
<dbReference type="PANTHER" id="PTHR42799:SF2">
    <property type="entry name" value="MITOCHONDRIAL PEPTIDE METHIONINE SULFOXIDE REDUCTASE"/>
    <property type="match status" value="1"/>
</dbReference>
<dbReference type="Pfam" id="PF01625">
    <property type="entry name" value="PMSR"/>
    <property type="match status" value="1"/>
</dbReference>
<dbReference type="SUPFAM" id="SSF55068">
    <property type="entry name" value="Peptide methionine sulfoxide reductase"/>
    <property type="match status" value="1"/>
</dbReference>